<comment type="function">
    <text evidence="1">Converts heme B (protoheme IX) to heme O by substitution of the vinyl group on carbon 2 of heme B porphyrin ring with a hydroxyethyl farnesyl side group.</text>
</comment>
<comment type="catalytic activity">
    <reaction evidence="1">
        <text>heme b + (2E,6E)-farnesyl diphosphate + H2O = Fe(II)-heme o + diphosphate</text>
        <dbReference type="Rhea" id="RHEA:28070"/>
        <dbReference type="ChEBI" id="CHEBI:15377"/>
        <dbReference type="ChEBI" id="CHEBI:33019"/>
        <dbReference type="ChEBI" id="CHEBI:60344"/>
        <dbReference type="ChEBI" id="CHEBI:60530"/>
        <dbReference type="ChEBI" id="CHEBI:175763"/>
        <dbReference type="EC" id="2.5.1.141"/>
    </reaction>
</comment>
<comment type="pathway">
    <text evidence="1">Porphyrin-containing compound metabolism; heme O biosynthesis; heme O from protoheme: step 1/1.</text>
</comment>
<comment type="subcellular location">
    <subcellularLocation>
        <location evidence="1">Cell inner membrane</location>
        <topology evidence="1">Multi-pass membrane protein</topology>
    </subcellularLocation>
</comment>
<comment type="miscellaneous">
    <text evidence="1">Carbon 2 of the heme B porphyrin ring is defined according to the Fischer nomenclature.</text>
</comment>
<comment type="similarity">
    <text evidence="1">Belongs to the UbiA prenyltransferase family. Protoheme IX farnesyltransferase subfamily.</text>
</comment>
<organism>
    <name type="scientific">Shewanella frigidimarina (strain NCIMB 400)</name>
    <dbReference type="NCBI Taxonomy" id="318167"/>
    <lineage>
        <taxon>Bacteria</taxon>
        <taxon>Pseudomonadati</taxon>
        <taxon>Pseudomonadota</taxon>
        <taxon>Gammaproteobacteria</taxon>
        <taxon>Alteromonadales</taxon>
        <taxon>Shewanellaceae</taxon>
        <taxon>Shewanella</taxon>
    </lineage>
</organism>
<keyword id="KW-0997">Cell inner membrane</keyword>
<keyword id="KW-1003">Cell membrane</keyword>
<keyword id="KW-0350">Heme biosynthesis</keyword>
<keyword id="KW-0472">Membrane</keyword>
<keyword id="KW-1185">Reference proteome</keyword>
<keyword id="KW-0808">Transferase</keyword>
<keyword id="KW-0812">Transmembrane</keyword>
<keyword id="KW-1133">Transmembrane helix</keyword>
<dbReference type="EC" id="2.5.1.141" evidence="1"/>
<dbReference type="EMBL" id="CP000447">
    <property type="protein sequence ID" value="ABI70083.1"/>
    <property type="molecule type" value="Genomic_DNA"/>
</dbReference>
<dbReference type="SMR" id="Q089I2"/>
<dbReference type="STRING" id="318167.Sfri_0220"/>
<dbReference type="KEGG" id="sfr:Sfri_0220"/>
<dbReference type="eggNOG" id="COG0109">
    <property type="taxonomic scope" value="Bacteria"/>
</dbReference>
<dbReference type="HOGENOM" id="CLU_029631_0_0_6"/>
<dbReference type="UniPathway" id="UPA00834">
    <property type="reaction ID" value="UER00712"/>
</dbReference>
<dbReference type="Proteomes" id="UP000000684">
    <property type="component" value="Chromosome"/>
</dbReference>
<dbReference type="GO" id="GO:0005886">
    <property type="term" value="C:plasma membrane"/>
    <property type="evidence" value="ECO:0007669"/>
    <property type="project" value="UniProtKB-SubCell"/>
</dbReference>
<dbReference type="GO" id="GO:0008495">
    <property type="term" value="F:protoheme IX farnesyltransferase activity"/>
    <property type="evidence" value="ECO:0007669"/>
    <property type="project" value="UniProtKB-UniRule"/>
</dbReference>
<dbReference type="GO" id="GO:0048034">
    <property type="term" value="P:heme O biosynthetic process"/>
    <property type="evidence" value="ECO:0007669"/>
    <property type="project" value="UniProtKB-UniRule"/>
</dbReference>
<dbReference type="CDD" id="cd13957">
    <property type="entry name" value="PT_UbiA_Cox10"/>
    <property type="match status" value="1"/>
</dbReference>
<dbReference type="FunFam" id="1.10.357.140:FF:000001">
    <property type="entry name" value="Protoheme IX farnesyltransferase"/>
    <property type="match status" value="1"/>
</dbReference>
<dbReference type="Gene3D" id="1.10.357.140">
    <property type="entry name" value="UbiA prenyltransferase"/>
    <property type="match status" value="1"/>
</dbReference>
<dbReference type="HAMAP" id="MF_00154">
    <property type="entry name" value="CyoE_CtaB"/>
    <property type="match status" value="1"/>
</dbReference>
<dbReference type="InterPro" id="IPR006369">
    <property type="entry name" value="Protohaem_IX_farnesylTrfase"/>
</dbReference>
<dbReference type="InterPro" id="IPR000537">
    <property type="entry name" value="UbiA_prenyltransferase"/>
</dbReference>
<dbReference type="InterPro" id="IPR030470">
    <property type="entry name" value="UbiA_prenylTrfase_CS"/>
</dbReference>
<dbReference type="InterPro" id="IPR044878">
    <property type="entry name" value="UbiA_sf"/>
</dbReference>
<dbReference type="NCBIfam" id="TIGR01473">
    <property type="entry name" value="cyoE_ctaB"/>
    <property type="match status" value="1"/>
</dbReference>
<dbReference type="NCBIfam" id="NF003348">
    <property type="entry name" value="PRK04375.1-1"/>
    <property type="match status" value="1"/>
</dbReference>
<dbReference type="PANTHER" id="PTHR43448">
    <property type="entry name" value="PROTOHEME IX FARNESYLTRANSFERASE, MITOCHONDRIAL"/>
    <property type="match status" value="1"/>
</dbReference>
<dbReference type="PANTHER" id="PTHR43448:SF2">
    <property type="entry name" value="PROTOHEME IX FARNESYLTRANSFERASE, MITOCHONDRIAL"/>
    <property type="match status" value="1"/>
</dbReference>
<dbReference type="Pfam" id="PF01040">
    <property type="entry name" value="UbiA"/>
    <property type="match status" value="1"/>
</dbReference>
<dbReference type="PROSITE" id="PS00943">
    <property type="entry name" value="UBIA"/>
    <property type="match status" value="1"/>
</dbReference>
<protein>
    <recommendedName>
        <fullName evidence="1">Protoheme IX farnesyltransferase 1</fullName>
        <ecNumber evidence="1">2.5.1.141</ecNumber>
    </recommendedName>
    <alternativeName>
        <fullName evidence="1">Heme B farnesyltransferase 1</fullName>
    </alternativeName>
    <alternativeName>
        <fullName evidence="1">Heme O synthase 1</fullName>
    </alternativeName>
</protein>
<name>CYOE1_SHEFN</name>
<reference key="1">
    <citation type="submission" date="2006-08" db="EMBL/GenBank/DDBJ databases">
        <title>Complete sequence of Shewanella frigidimarina NCIMB 400.</title>
        <authorList>
            <consortium name="US DOE Joint Genome Institute"/>
            <person name="Copeland A."/>
            <person name="Lucas S."/>
            <person name="Lapidus A."/>
            <person name="Barry K."/>
            <person name="Detter J.C."/>
            <person name="Glavina del Rio T."/>
            <person name="Hammon N."/>
            <person name="Israni S."/>
            <person name="Dalin E."/>
            <person name="Tice H."/>
            <person name="Pitluck S."/>
            <person name="Fredrickson J.K."/>
            <person name="Kolker E."/>
            <person name="McCuel L.A."/>
            <person name="DiChristina T."/>
            <person name="Nealson K.H."/>
            <person name="Newman D."/>
            <person name="Tiedje J.M."/>
            <person name="Zhou J."/>
            <person name="Romine M.F."/>
            <person name="Culley D.E."/>
            <person name="Serres M."/>
            <person name="Chertkov O."/>
            <person name="Brettin T."/>
            <person name="Bruce D."/>
            <person name="Han C."/>
            <person name="Tapia R."/>
            <person name="Gilna P."/>
            <person name="Schmutz J."/>
            <person name="Larimer F."/>
            <person name="Land M."/>
            <person name="Hauser L."/>
            <person name="Kyrpides N."/>
            <person name="Mikhailova N."/>
            <person name="Richardson P."/>
        </authorList>
    </citation>
    <scope>NUCLEOTIDE SEQUENCE [LARGE SCALE GENOMIC DNA]</scope>
    <source>
        <strain>NCIMB 400</strain>
    </source>
</reference>
<gene>
    <name evidence="1" type="primary">cyoE1</name>
    <name type="ordered locus">Sfri_0220</name>
</gene>
<accession>Q089I2</accession>
<evidence type="ECO:0000255" key="1">
    <source>
        <dbReference type="HAMAP-Rule" id="MF_00154"/>
    </source>
</evidence>
<feature type="chain" id="PRO_0000326945" description="Protoheme IX farnesyltransferase 1">
    <location>
        <begin position="1"/>
        <end position="303"/>
    </location>
</feature>
<feature type="transmembrane region" description="Helical" evidence="1">
    <location>
        <begin position="18"/>
        <end position="38"/>
    </location>
</feature>
<feature type="transmembrane region" description="Helical" evidence="1">
    <location>
        <begin position="42"/>
        <end position="62"/>
    </location>
</feature>
<feature type="transmembrane region" description="Helical" evidence="1">
    <location>
        <begin position="91"/>
        <end position="111"/>
    </location>
</feature>
<feature type="transmembrane region" description="Helical" evidence="1">
    <location>
        <begin position="114"/>
        <end position="134"/>
    </location>
</feature>
<feature type="transmembrane region" description="Helical" evidence="1">
    <location>
        <begin position="139"/>
        <end position="159"/>
    </location>
</feature>
<feature type="transmembrane region" description="Helical" evidence="1">
    <location>
        <begin position="169"/>
        <end position="189"/>
    </location>
</feature>
<feature type="transmembrane region" description="Helical" evidence="1">
    <location>
        <begin position="213"/>
        <end position="233"/>
    </location>
</feature>
<feature type="transmembrane region" description="Helical" evidence="1">
    <location>
        <begin position="235"/>
        <end position="255"/>
    </location>
</feature>
<feature type="transmembrane region" description="Helical" evidence="1">
    <location>
        <begin position="274"/>
        <end position="294"/>
    </location>
</feature>
<proteinExistence type="inferred from homology"/>
<sequence length="303" mass="32440">MSAQLTSRLRGYVQVTKPGIIMGNLISVAGGFLLAAQGNVDLTLMFATMIGLSLVVASGCAVNNCIDRDIDAKMQRTRNRVTVTGEISVQAVLSFGIGLGIIGFAMLAIFTNSLAVLFAAIGYVVYVGVYSLYMKRNSVYGTLVGSFSGAVPPVVGYCAVTGQMDMGAVILLLMFSLWQMPHSYAIAIFRFDDYAAANIPVLPVAQGMTKAKLHIVLYIAVFAVVSALLPLAGYTGIAFMAVTFATSLWWLAMALKGYRRDINLQSWARQVFGFSIITITALSVTMALDFQVVAQTPLLTLVP</sequence>